<dbReference type="EC" id="2.8.2.-" evidence="3"/>
<dbReference type="EMBL" id="DQ812996">
    <property type="protein sequence ID" value="ABH11458.1"/>
    <property type="molecule type" value="mRNA"/>
</dbReference>
<dbReference type="RefSeq" id="NP_001073663.1">
    <property type="nucleotide sequence ID" value="NM_001080194.1"/>
</dbReference>
<dbReference type="PDB" id="5T03">
    <property type="method" value="X-ray"/>
    <property type="resolution" value="2.10 A"/>
    <property type="chains" value="A/B=75-395"/>
</dbReference>
<dbReference type="PDB" id="5T05">
    <property type="method" value="X-ray"/>
    <property type="resolution" value="1.95 A"/>
    <property type="chains" value="A/B=75-395"/>
</dbReference>
<dbReference type="PDB" id="5T0A">
    <property type="method" value="X-ray"/>
    <property type="resolution" value="1.95 A"/>
    <property type="chains" value="A/B=75-395"/>
</dbReference>
<dbReference type="PDBsum" id="5T03"/>
<dbReference type="PDBsum" id="5T05"/>
<dbReference type="PDBsum" id="5T0A"/>
<dbReference type="SMR" id="A0MGZ7"/>
<dbReference type="FunCoup" id="A0MGZ7">
    <property type="interactions" value="445"/>
</dbReference>
<dbReference type="STRING" id="7955.ENSDARP00000065928"/>
<dbReference type="GlyCosmos" id="A0MGZ7">
    <property type="glycosylation" value="6 sites, No reported glycans"/>
</dbReference>
<dbReference type="PaxDb" id="7955-ENSDARP00000065928"/>
<dbReference type="GeneID" id="569353"/>
<dbReference type="KEGG" id="dre:569353"/>
<dbReference type="AGR" id="ZFIN:ZDB-GENE-070103-3"/>
<dbReference type="CTD" id="569353"/>
<dbReference type="ZFIN" id="ZDB-GENE-070103-3">
    <property type="gene designation" value="hs6st3b"/>
</dbReference>
<dbReference type="eggNOG" id="KOG3955">
    <property type="taxonomic scope" value="Eukaryota"/>
</dbReference>
<dbReference type="InParanoid" id="A0MGZ7"/>
<dbReference type="OrthoDB" id="406981at2759"/>
<dbReference type="Reactome" id="R-DRE-2022928">
    <property type="pathway name" value="HS-GAG biosynthesis"/>
</dbReference>
<dbReference type="PRO" id="PR:A0MGZ7"/>
<dbReference type="Proteomes" id="UP000000437">
    <property type="component" value="Alternate scaffold 9"/>
</dbReference>
<dbReference type="Proteomes" id="UP000000437">
    <property type="component" value="Chromosome 9"/>
</dbReference>
<dbReference type="GO" id="GO:0016020">
    <property type="term" value="C:membrane"/>
    <property type="evidence" value="ECO:0007669"/>
    <property type="project" value="UniProtKB-SubCell"/>
</dbReference>
<dbReference type="GO" id="GO:0050656">
    <property type="term" value="F:3'-phosphoadenosine 5'-phosphosulfate binding"/>
    <property type="evidence" value="ECO:0000314"/>
    <property type="project" value="ZFIN"/>
</dbReference>
<dbReference type="GO" id="GO:0017095">
    <property type="term" value="F:heparan sulfate 6-sulfotransferase activity"/>
    <property type="evidence" value="ECO:0000318"/>
    <property type="project" value="GO_Central"/>
</dbReference>
<dbReference type="GO" id="GO:0070492">
    <property type="term" value="F:oligosaccharide binding"/>
    <property type="evidence" value="ECO:0000314"/>
    <property type="project" value="ZFIN"/>
</dbReference>
<dbReference type="GO" id="GO:0008146">
    <property type="term" value="F:sulfotransferase activity"/>
    <property type="evidence" value="ECO:0000314"/>
    <property type="project" value="ZFIN"/>
</dbReference>
<dbReference type="FunFam" id="3.40.50.300:FF:000852">
    <property type="entry name" value="Heparan-sulfate 6-O-sulfotransferase"/>
    <property type="match status" value="1"/>
</dbReference>
<dbReference type="FunFam" id="3.40.50.300:FF:001933">
    <property type="entry name" value="Heparan-sulfate 6-O-sulfotransferase"/>
    <property type="match status" value="1"/>
</dbReference>
<dbReference type="Gene3D" id="3.40.50.300">
    <property type="entry name" value="P-loop containing nucleotide triphosphate hydrolases"/>
    <property type="match status" value="1"/>
</dbReference>
<dbReference type="InterPro" id="IPR010635">
    <property type="entry name" value="Heparan_SO4-6-sulfoTrfase"/>
</dbReference>
<dbReference type="InterPro" id="IPR027417">
    <property type="entry name" value="P-loop_NTPase"/>
</dbReference>
<dbReference type="InterPro" id="IPR005331">
    <property type="entry name" value="Sulfotransferase"/>
</dbReference>
<dbReference type="PANTHER" id="PTHR12812">
    <property type="entry name" value="HEPARAN SULFATE 6-O-SULFOTRANSFERASE 3"/>
    <property type="match status" value="1"/>
</dbReference>
<dbReference type="PANTHER" id="PTHR12812:SF3">
    <property type="entry name" value="HEPARAN-SULFATE 6-O-SULFOTRANSFERASE 3"/>
    <property type="match status" value="1"/>
</dbReference>
<dbReference type="Pfam" id="PF03567">
    <property type="entry name" value="Sulfotransfer_2"/>
    <property type="match status" value="1"/>
</dbReference>
<dbReference type="SUPFAM" id="SSF52540">
    <property type="entry name" value="P-loop containing nucleoside triphosphate hydrolases"/>
    <property type="match status" value="1"/>
</dbReference>
<accession>A0MGZ7</accession>
<feature type="chain" id="PRO_0000283820" description="Heparan-sulfate 6-O-sulfotransferase 3-B">
    <location>
        <begin position="1"/>
        <end position="419"/>
    </location>
</feature>
<feature type="topological domain" description="Cytoplasmic" evidence="1">
    <location>
        <begin position="1"/>
        <end position="7"/>
    </location>
</feature>
<feature type="transmembrane region" description="Helical; Signal-anchor for type II membrane protein" evidence="1">
    <location>
        <begin position="8"/>
        <end position="28"/>
    </location>
</feature>
<feature type="topological domain" description="Lumenal" evidence="1">
    <location>
        <begin position="29"/>
        <end position="419"/>
    </location>
</feature>
<feature type="active site" description="Proton acceptor" evidence="5">
    <location>
        <position position="158"/>
    </location>
</feature>
<feature type="binding site" evidence="3">
    <location>
        <begin position="101"/>
        <end position="109"/>
    </location>
    <ligand>
        <name>3'-phosphoadenylyl sulfate</name>
        <dbReference type="ChEBI" id="CHEBI:58339"/>
    </ligand>
</feature>
<feature type="binding site" evidence="3">
    <location>
        <begin position="131"/>
        <end position="132"/>
    </location>
    <ligand>
        <name>substrate</name>
    </ligand>
</feature>
<feature type="binding site" evidence="3">
    <location>
        <position position="148"/>
    </location>
    <ligand>
        <name>substrate</name>
    </ligand>
</feature>
<feature type="binding site" evidence="3">
    <location>
        <position position="153"/>
    </location>
    <ligand>
        <name>substrate</name>
    </ligand>
</feature>
<feature type="binding site" evidence="3">
    <location>
        <position position="158"/>
    </location>
    <ligand>
        <name>substrate</name>
    </ligand>
</feature>
<feature type="binding site" evidence="3">
    <location>
        <position position="191"/>
    </location>
    <ligand>
        <name>3'-phosphoadenylyl sulfate</name>
        <dbReference type="ChEBI" id="CHEBI:58339"/>
    </ligand>
</feature>
<feature type="binding site" evidence="3">
    <location>
        <position position="199"/>
    </location>
    <ligand>
        <name>3'-phosphoadenylyl sulfate</name>
        <dbReference type="ChEBI" id="CHEBI:58339"/>
    </ligand>
</feature>
<feature type="binding site" evidence="3">
    <location>
        <position position="203"/>
    </location>
    <ligand>
        <name>substrate</name>
    </ligand>
</feature>
<feature type="binding site" evidence="3">
    <location>
        <position position="210"/>
    </location>
    <ligand>
        <name>substrate</name>
    </ligand>
</feature>
<feature type="binding site" evidence="3">
    <location>
        <begin position="323"/>
        <end position="325"/>
    </location>
    <ligand>
        <name>3'-phosphoadenylyl sulfate</name>
        <dbReference type="ChEBI" id="CHEBI:58339"/>
    </ligand>
</feature>
<feature type="binding site" evidence="3">
    <location>
        <begin position="329"/>
        <end position="330"/>
    </location>
    <ligand>
        <name>3'-phosphoadenylyl sulfate</name>
        <dbReference type="ChEBI" id="CHEBI:58339"/>
    </ligand>
</feature>
<feature type="glycosylation site" description="N-linked (GlcNAc...) asparagine" evidence="1">
    <location>
        <position position="77"/>
    </location>
</feature>
<feature type="glycosylation site" description="N-linked (GlcNAc...) asparagine" evidence="1">
    <location>
        <position position="270"/>
    </location>
</feature>
<feature type="glycosylation site" description="N-linked (GlcNAc...) asparagine" evidence="1">
    <location>
        <position position="275"/>
    </location>
</feature>
<feature type="glycosylation site" description="N-linked (GlcNAc...) asparagine" evidence="1">
    <location>
        <position position="326"/>
    </location>
</feature>
<feature type="glycosylation site" description="N-linked (GlcNAc...) asparagine" evidence="1">
    <location>
        <position position="393"/>
    </location>
</feature>
<feature type="glycosylation site" description="N-linked (GlcNAc...) asparagine" evidence="1">
    <location>
        <position position="402"/>
    </location>
</feature>
<feature type="mutagenesis site" description="Significantly impairs catalytic activity." evidence="3">
    <original>H</original>
    <variation>A</variation>
    <location>
        <position position="101"/>
    </location>
</feature>
<feature type="mutagenesis site" description="Significantly impairs catalytic activity." evidence="3">
    <original>K</original>
    <variation>A</variation>
    <location>
        <position position="104"/>
    </location>
</feature>
<feature type="mutagenesis site" description="Slightly impairs catalytic activity." evidence="3">
    <original>K</original>
    <variation>A</variation>
    <location>
        <position position="131"/>
    </location>
</feature>
<feature type="mutagenesis site" description="Significantly impairs catalytic activity." evidence="3">
    <original>K</original>
    <variation>A</variation>
    <variation>E</variation>
    <location>
        <position position="132"/>
    </location>
</feature>
<feature type="mutagenesis site" description="Moderately impairs catalytic activity." evidence="3">
    <original>R</original>
    <variation>A</variation>
    <location>
        <position position="148"/>
    </location>
</feature>
<feature type="mutagenesis site" description="Moderately impairs catalytic activity." evidence="3">
    <original>W</original>
    <variation>A</variation>
    <location>
        <position position="153"/>
    </location>
</feature>
<feature type="mutagenesis site" description="Abolishes catalytic activity." evidence="3">
    <original>H</original>
    <variation>A</variation>
    <location>
        <position position="158"/>
    </location>
</feature>
<feature type="mutagenesis site" description="Significantly impairs catalytic activity." evidence="3">
    <original>H</original>
    <variation>A</variation>
    <location>
        <position position="203"/>
    </location>
</feature>
<feature type="mutagenesis site" description="Significantly impairs catalytic activity." evidence="3">
    <original>W</original>
    <variation>A</variation>
    <location>
        <position position="210"/>
    </location>
</feature>
<feature type="helix" evidence="9">
    <location>
        <begin position="80"/>
        <end position="83"/>
    </location>
</feature>
<feature type="turn" evidence="9">
    <location>
        <begin position="91"/>
        <end position="94"/>
    </location>
</feature>
<feature type="strand" evidence="9">
    <location>
        <begin position="96"/>
        <end position="99"/>
    </location>
</feature>
<feature type="helix" evidence="9">
    <location>
        <begin position="107"/>
        <end position="116"/>
    </location>
</feature>
<feature type="strand" evidence="9">
    <location>
        <begin position="143"/>
        <end position="147"/>
    </location>
</feature>
<feature type="turn" evidence="9">
    <location>
        <begin position="148"/>
        <end position="151"/>
    </location>
</feature>
<feature type="helix" evidence="9">
    <location>
        <begin position="161"/>
        <end position="172"/>
    </location>
</feature>
<feature type="strand" evidence="9">
    <location>
        <begin position="184"/>
        <end position="190"/>
    </location>
</feature>
<feature type="helix" evidence="9">
    <location>
        <begin position="193"/>
        <end position="205"/>
    </location>
</feature>
<feature type="turn" evidence="9">
    <location>
        <begin position="224"/>
        <end position="226"/>
    </location>
</feature>
<feature type="strand" evidence="8">
    <location>
        <begin position="230"/>
        <end position="234"/>
    </location>
</feature>
<feature type="helix" evidence="9">
    <location>
        <begin position="241"/>
        <end position="246"/>
    </location>
</feature>
<feature type="turn" evidence="9">
    <location>
        <begin position="251"/>
        <end position="254"/>
    </location>
</feature>
<feature type="helix" evidence="9">
    <location>
        <begin position="255"/>
        <end position="260"/>
    </location>
</feature>
<feature type="helix" evidence="9">
    <location>
        <begin position="263"/>
        <end position="266"/>
    </location>
</feature>
<feature type="turn" evidence="9">
    <location>
        <begin position="267"/>
        <end position="269"/>
    </location>
</feature>
<feature type="helix" evidence="9">
    <location>
        <begin position="276"/>
        <end position="293"/>
    </location>
</feature>
<feature type="strand" evidence="9">
    <location>
        <begin position="294"/>
        <end position="299"/>
    </location>
</feature>
<feature type="helix" evidence="9">
    <location>
        <begin position="303"/>
        <end position="314"/>
    </location>
</feature>
<feature type="strand" evidence="9">
    <location>
        <begin position="318"/>
        <end position="320"/>
    </location>
</feature>
<feature type="turn" evidence="9">
    <location>
        <begin position="329"/>
        <end position="332"/>
    </location>
</feature>
<feature type="helix" evidence="9">
    <location>
        <begin position="337"/>
        <end position="346"/>
    </location>
</feature>
<feature type="helix" evidence="9">
    <location>
        <begin position="348"/>
        <end position="382"/>
    </location>
</feature>
<feature type="helix" evidence="9">
    <location>
        <begin position="384"/>
        <end position="389"/>
    </location>
</feature>
<name>H6S3B_DANRE</name>
<comment type="function">
    <text evidence="3">6-O-sulfation enzyme which catalyzes the transfer of sulfate from 3'-phosphoadenosine 5'-phosphosulfate (PAPS) to position 6 of the N-sulfoglucosamine residue (GlcNS) of heparan sulfate.</text>
</comment>
<comment type="catalytic activity">
    <reaction evidence="3">
        <text>alpha-D-glucosaminyl-[heparan sulfate](n) + 3'-phosphoadenylyl sulfate = 6-sulfo-alpha-D-glucosaminyl-[heparan sulfate](n) + adenosine 3',5'-bisphosphate + H(+)</text>
        <dbReference type="Rhea" id="RHEA:56604"/>
        <dbReference type="Rhea" id="RHEA-COMP:9830"/>
        <dbReference type="Rhea" id="RHEA-COMP:14621"/>
        <dbReference type="ChEBI" id="CHEBI:15378"/>
        <dbReference type="ChEBI" id="CHEBI:58339"/>
        <dbReference type="ChEBI" id="CHEBI:58343"/>
        <dbReference type="ChEBI" id="CHEBI:58388"/>
        <dbReference type="ChEBI" id="CHEBI:140604"/>
    </reaction>
</comment>
<comment type="subcellular location">
    <subcellularLocation>
        <location evidence="1">Membrane</location>
        <topology evidence="1">Single-pass type II membrane protein</topology>
    </subcellularLocation>
</comment>
<comment type="tissue specificity">
    <text evidence="2">In early somitogenesis, expressed in presumptive forebrain and midbrain, tail bud and Kupffer's vesicle. During mid-somitogenesis, ubiquitous expression which is strongest in the somites and eye. During late somitogenesis, predominantly expressed in eye, hindbrain and ventral somites. At 24 hours post-fertilization (hpf), restricted to lens and neural retina, brain, otic vesicle and somites. At 36 hpf, brain expression is restricted to telencephalon. At 48 hpf, restricted to telencephalon and pectoral fin.</text>
</comment>
<comment type="developmental stage">
    <text evidence="2">Expressed both maternally and zygotically.</text>
</comment>
<comment type="similarity">
    <text evidence="1">Belongs to the sulfotransferase 6 family.</text>
</comment>
<protein>
    <recommendedName>
        <fullName evidence="7">Heparan-sulfate 6-O-sulfotransferase 3-B</fullName>
        <shortName evidence="4">HS 6-OST-3-B</shortName>
        <ecNumber evidence="3">2.8.2.-</ecNumber>
    </recommendedName>
</protein>
<keyword id="KW-0002">3D-structure</keyword>
<keyword id="KW-0325">Glycoprotein</keyword>
<keyword id="KW-0472">Membrane</keyword>
<keyword id="KW-1185">Reference proteome</keyword>
<keyword id="KW-0735">Signal-anchor</keyword>
<keyword id="KW-0808">Transferase</keyword>
<keyword id="KW-0812">Transmembrane</keyword>
<keyword id="KW-1133">Transmembrane helix</keyword>
<gene>
    <name evidence="7" type="primary">hs6st3b</name>
</gene>
<organism>
    <name type="scientific">Danio rerio</name>
    <name type="common">Zebrafish</name>
    <name type="synonym">Brachydanio rerio</name>
    <dbReference type="NCBI Taxonomy" id="7955"/>
    <lineage>
        <taxon>Eukaryota</taxon>
        <taxon>Metazoa</taxon>
        <taxon>Chordata</taxon>
        <taxon>Craniata</taxon>
        <taxon>Vertebrata</taxon>
        <taxon>Euteleostomi</taxon>
        <taxon>Actinopterygii</taxon>
        <taxon>Neopterygii</taxon>
        <taxon>Teleostei</taxon>
        <taxon>Ostariophysi</taxon>
        <taxon>Cypriniformes</taxon>
        <taxon>Danionidae</taxon>
        <taxon>Danioninae</taxon>
        <taxon>Danio</taxon>
    </lineage>
</organism>
<proteinExistence type="evidence at protein level"/>
<reference evidence="4 6" key="1">
    <citation type="journal article" date="2006" name="Dev. Dyn.">
        <title>Combinatorial expression patterns of heparan sulfate sulfotransferases in zebrafish: II. The 6-O-sulfotransferase family.</title>
        <authorList>
            <person name="Cadwallader A.B."/>
            <person name="Yost H.J."/>
        </authorList>
    </citation>
    <scope>NUCLEOTIDE SEQUENCE [MRNA]</scope>
    <scope>TISSUE SPECIFICITY</scope>
    <scope>DEVELOPMENTAL STAGE</scope>
</reference>
<reference key="2">
    <citation type="journal article" date="2017" name="ACS Chem. Biol.">
        <title>Structure based substrate specificity analysis of heparan sulfate 6-O-sulfotransferases.</title>
        <authorList>
            <person name="Xu Y."/>
            <person name="Moon A.F."/>
            <person name="Xu S."/>
            <person name="Krahn J.M."/>
            <person name="Liu J."/>
            <person name="Pedersen L.C."/>
        </authorList>
    </citation>
    <scope>X-RAY CRYSTALLOGRAPHY (1.95 ANGSTROMS) OF 75-395 IN COMPLEX WITH PAPS AND HEPARAN SULFATE OLIGOSACCHARIDE SUBSTRATES</scope>
    <scope>FUNCTION</scope>
    <scope>CATALYTIC ACTIVITY</scope>
    <scope>ACTIVE SITE</scope>
    <scope>MUTAGENESIS OF HIS-101; LYS-104; LYS-131; LYS-132; ARG-148; TRP-153; HIS-158; HIS-203 AND TRP-210</scope>
</reference>
<sequence length="419" mass="49346">MNDKPNKWIFIPILAILFVMIGYQYVCPAGGQACHFRTGDKLVRIAPLATPDPTTDDLYREQDPEEDNPPKCASKFNFTERDLTRDVDFNIKGDDVIVFLHIQKTGGTTFGRHLVRNIRLEQPCDCKAGQKKCTCHRPGKQESWLFSRFSTGWSCGLHADWTELTNCVPVIMDKRQPPKRKRNFYYITMLRDPVSRYLSEWKHVQRGATWKTSLHMCDGRSPTQDELPTCYNGDDWSGVTLHDFMDCPSNLANNRQVRMLADLSLVGCYNLSTMNESERNPILLASAKSNLKNMAFYGLTEFQRKTQYLFERTFHLRFISAFTQINSTRAANVELRDDMRSRIEQLNMLDMQLYEFAKDLFLQRYQFVRQRERQEERLKRREERRWIRERRVNQSKEPIVENQTRVTTTEDYASQVVRW</sequence>
<evidence type="ECO:0000255" key="1"/>
<evidence type="ECO:0000269" key="2">
    <source>
    </source>
</evidence>
<evidence type="ECO:0000269" key="3">
    <source>
    </source>
</evidence>
<evidence type="ECO:0000305" key="4"/>
<evidence type="ECO:0000305" key="5">
    <source>
    </source>
</evidence>
<evidence type="ECO:0000312" key="6">
    <source>
        <dbReference type="EMBL" id="ABH11458.1"/>
    </source>
</evidence>
<evidence type="ECO:0000312" key="7">
    <source>
        <dbReference type="ZFIN" id="ZDB-GENE-070103-3"/>
    </source>
</evidence>
<evidence type="ECO:0007829" key="8">
    <source>
        <dbReference type="PDB" id="5T05"/>
    </source>
</evidence>
<evidence type="ECO:0007829" key="9">
    <source>
        <dbReference type="PDB" id="5T0A"/>
    </source>
</evidence>